<sequence>MALIEAFLLQGSPTGTILGALLLFLVIYLFSSSSSSQDKEKYPPGPKPLPLLGNLHILDLKKTYLSLLELSKKYGPIYTVYLGPKKVVILSGYKIVKEALVNLSEEFGDRDISPIFHDFNRGYGIAFSNGENWREMRRFALSTLRDFGMGRKRSEELIIEEIKYVKEEFEKFGGNPFETKLPLALAISNIIASIVFSVRFEYSNTKLHRMVGRAYENMKLTGSPSVQIYNMFPWLRPIVANRNQIVKNLRDTFKQNEELINGVMKTLDPFNPRGIVDSFLIRQQKDEESGKTDSLYNSNNLYCTVNNLFGAGTDTTVTTLRWGLLLMAKYPEIQAKVQDEIERVIGGRQPVVEDRKNLPYTDAVIHEIQRFADISPIGAPRQTTCDVHLNGYFIKKGTPVFPLLVSVLRDENEWETPDSFNPKHFLNKQGQFVKKDAFMPFGAGRRVCIGESLARMELFLFFTSLLQYFRFTPPPGVSEDDLDLTPVVGFTLNPKPHQLCAVKRS</sequence>
<gene>
    <name evidence="5 12" type="primary">cyp2k6</name>
</gene>
<comment type="function">
    <text evidence="4">Metabolizes aflatoxin B1 (AFB1) to the cytotoxic derivative AFB1 exo-8,9-epoxide. Does not show activity towards lauric acid.</text>
</comment>
<comment type="cofactor">
    <cofactor evidence="4">
        <name>heme</name>
        <dbReference type="ChEBI" id="CHEBI:30413"/>
    </cofactor>
</comment>
<comment type="subcellular location">
    <subcellularLocation>
        <location evidence="7">Endoplasmic reticulum membrane</location>
        <topology evidence="2">Single-pass membrane protein</topology>
    </subcellularLocation>
    <subcellularLocation>
        <location evidence="4">Microsome membrane</location>
        <topology evidence="2">Single-pass membrane protein</topology>
    </subcellularLocation>
</comment>
<comment type="tissue specificity">
    <text evidence="4">Detected in liver and ovary.</text>
</comment>
<comment type="developmental stage">
    <text evidence="4">Expressed from 5 days post-fertilization onwards.</text>
</comment>
<comment type="similarity">
    <text evidence="3">Belongs to the cytochrome P450 family.</text>
</comment>
<organism evidence="11">
    <name type="scientific">Danio rerio</name>
    <name type="common">Zebrafish</name>
    <name type="synonym">Brachydanio rerio</name>
    <dbReference type="NCBI Taxonomy" id="7955"/>
    <lineage>
        <taxon>Eukaryota</taxon>
        <taxon>Metazoa</taxon>
        <taxon>Chordata</taxon>
        <taxon>Craniata</taxon>
        <taxon>Vertebrata</taxon>
        <taxon>Euteleostomi</taxon>
        <taxon>Actinopterygii</taxon>
        <taxon>Neopterygii</taxon>
        <taxon>Teleostei</taxon>
        <taxon>Ostariophysi</taxon>
        <taxon>Cypriniformes</taxon>
        <taxon>Danionidae</taxon>
        <taxon>Danioninae</taxon>
        <taxon>Danio</taxon>
    </lineage>
</organism>
<accession>F1Q8C3</accession>
<accession>Q7SXK7</accession>
<accession>Q802U6</accession>
<accession>Q90Y45</accession>
<reference evidence="10" key="1">
    <citation type="journal article" date="2005" name="Comp. Biochem. Physiol.">
        <title>CYP2K6 from zebrafish (Danio rerio): cloning, mapping, developmental/tissue expression, and aflatoxin B1 activation by baculovirus expressed enzyme.</title>
        <authorList>
            <person name="Wang-Buhler J.L."/>
            <person name="Lee S.J."/>
            <person name="Chung W.G."/>
            <person name="Stevens J.F."/>
            <person name="Tseng H.P."/>
            <person name="Hseu T.H."/>
            <person name="Hu C.H."/>
            <person name="Westerfield M."/>
            <person name="Yang Y.H."/>
            <person name="Miranda C.L."/>
            <person name="Buhler D.R."/>
        </authorList>
    </citation>
    <scope>NUCLEOTIDE SEQUENCE [MRNA]</scope>
    <scope>FUNCTION</scope>
    <scope>CATALYTIC ACTIVITY</scope>
    <scope>COFACTOR</scope>
    <scope>SUBCELLULAR LOCATION</scope>
    <scope>TISSUE SPECIFICITY</scope>
    <scope>DEVELOPMENTAL STAGE</scope>
</reference>
<reference evidence="11" key="2">
    <citation type="journal article" date="2013" name="Nature">
        <title>The zebrafish reference genome sequence and its relationship to the human genome.</title>
        <authorList>
            <person name="Howe K."/>
            <person name="Clark M.D."/>
            <person name="Torroja C.F."/>
            <person name="Torrance J."/>
            <person name="Berthelot C."/>
            <person name="Muffato M."/>
            <person name="Collins J.E."/>
            <person name="Humphray S."/>
            <person name="McLaren K."/>
            <person name="Matthews L."/>
            <person name="McLaren S."/>
            <person name="Sealy I."/>
            <person name="Caccamo M."/>
            <person name="Churcher C."/>
            <person name="Scott C."/>
            <person name="Barrett J.C."/>
            <person name="Koch R."/>
            <person name="Rauch G.J."/>
            <person name="White S."/>
            <person name="Chow W."/>
            <person name="Kilian B."/>
            <person name="Quintais L.T."/>
            <person name="Guerra-Assuncao J.A."/>
            <person name="Zhou Y."/>
            <person name="Gu Y."/>
            <person name="Yen J."/>
            <person name="Vogel J.H."/>
            <person name="Eyre T."/>
            <person name="Redmond S."/>
            <person name="Banerjee R."/>
            <person name="Chi J."/>
            <person name="Fu B."/>
            <person name="Langley E."/>
            <person name="Maguire S.F."/>
            <person name="Laird G.K."/>
            <person name="Lloyd D."/>
            <person name="Kenyon E."/>
            <person name="Donaldson S."/>
            <person name="Sehra H."/>
            <person name="Almeida-King J."/>
            <person name="Loveland J."/>
            <person name="Trevanion S."/>
            <person name="Jones M."/>
            <person name="Quail M."/>
            <person name="Willey D."/>
            <person name="Hunt A."/>
            <person name="Burton J."/>
            <person name="Sims S."/>
            <person name="McLay K."/>
            <person name="Plumb B."/>
            <person name="Davis J."/>
            <person name="Clee C."/>
            <person name="Oliver K."/>
            <person name="Clark R."/>
            <person name="Riddle C."/>
            <person name="Elliot D."/>
            <person name="Threadgold G."/>
            <person name="Harden G."/>
            <person name="Ware D."/>
            <person name="Begum S."/>
            <person name="Mortimore B."/>
            <person name="Kerry G."/>
            <person name="Heath P."/>
            <person name="Phillimore B."/>
            <person name="Tracey A."/>
            <person name="Corby N."/>
            <person name="Dunn M."/>
            <person name="Johnson C."/>
            <person name="Wood J."/>
            <person name="Clark S."/>
            <person name="Pelan S."/>
            <person name="Griffiths G."/>
            <person name="Smith M."/>
            <person name="Glithero R."/>
            <person name="Howden P."/>
            <person name="Barker N."/>
            <person name="Lloyd C."/>
            <person name="Stevens C."/>
            <person name="Harley J."/>
            <person name="Holt K."/>
            <person name="Panagiotidis G."/>
            <person name="Lovell J."/>
            <person name="Beasley H."/>
            <person name="Henderson C."/>
            <person name="Gordon D."/>
            <person name="Auger K."/>
            <person name="Wright D."/>
            <person name="Collins J."/>
            <person name="Raisen C."/>
            <person name="Dyer L."/>
            <person name="Leung K."/>
            <person name="Robertson L."/>
            <person name="Ambridge K."/>
            <person name="Leongamornlert D."/>
            <person name="McGuire S."/>
            <person name="Gilderthorp R."/>
            <person name="Griffiths C."/>
            <person name="Manthravadi D."/>
            <person name="Nichol S."/>
            <person name="Barker G."/>
            <person name="Whitehead S."/>
            <person name="Kay M."/>
            <person name="Brown J."/>
            <person name="Murnane C."/>
            <person name="Gray E."/>
            <person name="Humphries M."/>
            <person name="Sycamore N."/>
            <person name="Barker D."/>
            <person name="Saunders D."/>
            <person name="Wallis J."/>
            <person name="Babbage A."/>
            <person name="Hammond S."/>
            <person name="Mashreghi-Mohammadi M."/>
            <person name="Barr L."/>
            <person name="Martin S."/>
            <person name="Wray P."/>
            <person name="Ellington A."/>
            <person name="Matthews N."/>
            <person name="Ellwood M."/>
            <person name="Woodmansey R."/>
            <person name="Clark G."/>
            <person name="Cooper J."/>
            <person name="Tromans A."/>
            <person name="Grafham D."/>
            <person name="Skuce C."/>
            <person name="Pandian R."/>
            <person name="Andrews R."/>
            <person name="Harrison E."/>
            <person name="Kimberley A."/>
            <person name="Garnett J."/>
            <person name="Fosker N."/>
            <person name="Hall R."/>
            <person name="Garner P."/>
            <person name="Kelly D."/>
            <person name="Bird C."/>
            <person name="Palmer S."/>
            <person name="Gehring I."/>
            <person name="Berger A."/>
            <person name="Dooley C.M."/>
            <person name="Ersan-Urun Z."/>
            <person name="Eser C."/>
            <person name="Geiger H."/>
            <person name="Geisler M."/>
            <person name="Karotki L."/>
            <person name="Kirn A."/>
            <person name="Konantz J."/>
            <person name="Konantz M."/>
            <person name="Oberlander M."/>
            <person name="Rudolph-Geiger S."/>
            <person name="Teucke M."/>
            <person name="Lanz C."/>
            <person name="Raddatz G."/>
            <person name="Osoegawa K."/>
            <person name="Zhu B."/>
            <person name="Rapp A."/>
            <person name="Widaa S."/>
            <person name="Langford C."/>
            <person name="Yang F."/>
            <person name="Schuster S.C."/>
            <person name="Carter N.P."/>
            <person name="Harrow J."/>
            <person name="Ning Z."/>
            <person name="Herrero J."/>
            <person name="Searle S.M."/>
            <person name="Enright A."/>
            <person name="Geisler R."/>
            <person name="Plasterk R.H."/>
            <person name="Lee C."/>
            <person name="Westerfield M."/>
            <person name="de Jong P.J."/>
            <person name="Zon L.I."/>
            <person name="Postlethwait J.H."/>
            <person name="Nusslein-Volhard C."/>
            <person name="Hubbard T.J."/>
            <person name="Roest Crollius H."/>
            <person name="Rogers J."/>
            <person name="Stemple D.L."/>
        </authorList>
    </citation>
    <scope>NUCLEOTIDE SEQUENCE [LARGE SCALE GENOMIC DNA]</scope>
    <source>
        <strain evidence="11">Tuebingen</strain>
    </source>
</reference>
<reference evidence="8" key="3">
    <citation type="submission" date="2008-04" db="EMBL/GenBank/DDBJ databases">
        <authorList>
            <consortium name="NIH - Zebrafish Gene Collection (ZGC) project"/>
        </authorList>
    </citation>
    <scope>NUCLEOTIDE SEQUENCE [LARGE SCALE MRNA]</scope>
    <source>
        <strain evidence="9">AB</strain>
    </source>
</reference>
<keyword id="KW-0256">Endoplasmic reticulum</keyword>
<keyword id="KW-0349">Heme</keyword>
<keyword id="KW-0408">Iron</keyword>
<keyword id="KW-0472">Membrane</keyword>
<keyword id="KW-0479">Metal-binding</keyword>
<keyword id="KW-0492">Microsome</keyword>
<keyword id="KW-0503">Monooxygenase</keyword>
<keyword id="KW-0560">Oxidoreductase</keyword>
<keyword id="KW-1185">Reference proteome</keyword>
<keyword id="KW-0812">Transmembrane</keyword>
<keyword id="KW-1133">Transmembrane helix</keyword>
<evidence type="ECO:0000250" key="1">
    <source>
        <dbReference type="UniProtKB" id="P33261"/>
    </source>
</evidence>
<evidence type="ECO:0000255" key="2"/>
<evidence type="ECO:0000255" key="3">
    <source>
        <dbReference type="RuleBase" id="RU000461"/>
    </source>
</evidence>
<evidence type="ECO:0000269" key="4">
    <source>
    </source>
</evidence>
<evidence type="ECO:0000303" key="5">
    <source>
    </source>
</evidence>
<evidence type="ECO:0000305" key="6"/>
<evidence type="ECO:0000305" key="7">
    <source>
    </source>
</evidence>
<evidence type="ECO:0000312" key="8">
    <source>
        <dbReference type="EMBL" id="AAH47194.2"/>
    </source>
</evidence>
<evidence type="ECO:0000312" key="9">
    <source>
        <dbReference type="EMBL" id="AAH55556.1"/>
    </source>
</evidence>
<evidence type="ECO:0000312" key="10">
    <source>
        <dbReference type="EMBL" id="AAK97022.1"/>
    </source>
</evidence>
<evidence type="ECO:0000312" key="11">
    <source>
        <dbReference type="Proteomes" id="UP000000437"/>
    </source>
</evidence>
<evidence type="ECO:0000312" key="12">
    <source>
        <dbReference type="ZFIN" id="ZDB-GENE-040426-1571"/>
    </source>
</evidence>
<proteinExistence type="evidence at protein level"/>
<dbReference type="EC" id="1.14.14.-" evidence="4"/>
<dbReference type="EMBL" id="AF283813">
    <property type="protein sequence ID" value="AAK97022.1"/>
    <property type="molecule type" value="mRNA"/>
</dbReference>
<dbReference type="EMBL" id="AL929078">
    <property type="status" value="NOT_ANNOTATED_CDS"/>
    <property type="molecule type" value="Genomic_DNA"/>
</dbReference>
<dbReference type="EMBL" id="BX511176">
    <property type="status" value="NOT_ANNOTATED_CDS"/>
    <property type="molecule type" value="Genomic_DNA"/>
</dbReference>
<dbReference type="EMBL" id="BC047194">
    <property type="protein sequence ID" value="AAH47194.2"/>
    <property type="molecule type" value="mRNA"/>
</dbReference>
<dbReference type="EMBL" id="BC055556">
    <property type="protein sequence ID" value="AAH55556.1"/>
    <property type="molecule type" value="mRNA"/>
</dbReference>
<dbReference type="EMBL" id="BC164859">
    <property type="protein sequence ID" value="AAI64859.1"/>
    <property type="molecule type" value="mRNA"/>
</dbReference>
<dbReference type="RefSeq" id="NP_956803.2">
    <property type="nucleotide sequence ID" value="NM_200509.2"/>
</dbReference>
<dbReference type="RefSeq" id="XP_009297487.1">
    <property type="nucleotide sequence ID" value="XM_009299212.2"/>
</dbReference>
<dbReference type="SMR" id="F1Q8C3"/>
<dbReference type="FunCoup" id="F1Q8C3">
    <property type="interactions" value="32"/>
</dbReference>
<dbReference type="STRING" id="7955.ENSDARP00000135007"/>
<dbReference type="PaxDb" id="7955-ENSDARP00000092100"/>
<dbReference type="Ensembl" id="ENSDART00000163743">
    <property type="protein sequence ID" value="ENSDARP00000134138"/>
    <property type="gene ID" value="ENSDARG00000098995"/>
</dbReference>
<dbReference type="Ensembl" id="ENSDART00000170788">
    <property type="protein sequence ID" value="ENSDARP00000135007"/>
    <property type="gene ID" value="ENSDARG00000098995"/>
</dbReference>
<dbReference type="GeneID" id="393481"/>
<dbReference type="KEGG" id="dre:393481"/>
<dbReference type="AGR" id="ZFIN:ZDB-GENE-040426-1571"/>
<dbReference type="CTD" id="393481"/>
<dbReference type="ZFIN" id="ZDB-GENE-040426-1571">
    <property type="gene designation" value="cyp2k6"/>
</dbReference>
<dbReference type="eggNOG" id="KOG0156">
    <property type="taxonomic scope" value="Eukaryota"/>
</dbReference>
<dbReference type="HOGENOM" id="CLU_001570_22_3_1"/>
<dbReference type="InParanoid" id="F1Q8C3"/>
<dbReference type="OMA" id="ANDAMYA"/>
<dbReference type="OrthoDB" id="2789670at2759"/>
<dbReference type="PhylomeDB" id="F1Q8C3"/>
<dbReference type="TreeFam" id="TF352043"/>
<dbReference type="Reactome" id="R-DRE-211958">
    <property type="pathway name" value="Miscellaneous substrates"/>
</dbReference>
<dbReference type="Reactome" id="R-DRE-211981">
    <property type="pathway name" value="Xenobiotics"/>
</dbReference>
<dbReference type="PRO" id="PR:F1Q8C3"/>
<dbReference type="Proteomes" id="UP000000437">
    <property type="component" value="Alternate scaffold 3"/>
</dbReference>
<dbReference type="Proteomes" id="UP000000437">
    <property type="component" value="Chromosome 3"/>
</dbReference>
<dbReference type="Bgee" id="ENSDARG00000098995">
    <property type="expression patterns" value="Expressed in intestine and 9 other cell types or tissues"/>
</dbReference>
<dbReference type="GO" id="GO:0005737">
    <property type="term" value="C:cytoplasm"/>
    <property type="evidence" value="ECO:0000318"/>
    <property type="project" value="GO_Central"/>
</dbReference>
<dbReference type="GO" id="GO:0005789">
    <property type="term" value="C:endoplasmic reticulum membrane"/>
    <property type="evidence" value="ECO:0007669"/>
    <property type="project" value="UniProtKB-SubCell"/>
</dbReference>
<dbReference type="GO" id="GO:0043231">
    <property type="term" value="C:intracellular membrane-bounded organelle"/>
    <property type="evidence" value="ECO:0000318"/>
    <property type="project" value="GO_Central"/>
</dbReference>
<dbReference type="GO" id="GO:0020037">
    <property type="term" value="F:heme binding"/>
    <property type="evidence" value="ECO:0000318"/>
    <property type="project" value="GO_Central"/>
</dbReference>
<dbReference type="GO" id="GO:0005506">
    <property type="term" value="F:iron ion binding"/>
    <property type="evidence" value="ECO:0007669"/>
    <property type="project" value="InterPro"/>
</dbReference>
<dbReference type="GO" id="GO:0016712">
    <property type="term" value="F:oxidoreductase activity, acting on paired donors, with incorporation or reduction of molecular oxygen, reduced flavin or flavoprotein as one donor, and incorporation of one atom of oxygen"/>
    <property type="evidence" value="ECO:0000318"/>
    <property type="project" value="GO_Central"/>
</dbReference>
<dbReference type="GO" id="GO:0046222">
    <property type="term" value="P:aflatoxin metabolic process"/>
    <property type="evidence" value="ECO:0000314"/>
    <property type="project" value="ZFIN"/>
</dbReference>
<dbReference type="GO" id="GO:0006082">
    <property type="term" value="P:organic acid metabolic process"/>
    <property type="evidence" value="ECO:0000318"/>
    <property type="project" value="GO_Central"/>
</dbReference>
<dbReference type="GO" id="GO:0006805">
    <property type="term" value="P:xenobiotic metabolic process"/>
    <property type="evidence" value="ECO:0000318"/>
    <property type="project" value="GO_Central"/>
</dbReference>
<dbReference type="CDD" id="cd20664">
    <property type="entry name" value="CYP2K"/>
    <property type="match status" value="1"/>
</dbReference>
<dbReference type="FunFam" id="1.10.630.10:FF:000010">
    <property type="entry name" value="cytochrome P450 2W1 isoform X2"/>
    <property type="match status" value="1"/>
</dbReference>
<dbReference type="Gene3D" id="1.10.630.10">
    <property type="entry name" value="Cytochrome P450"/>
    <property type="match status" value="1"/>
</dbReference>
<dbReference type="InterPro" id="IPR001128">
    <property type="entry name" value="Cyt_P450"/>
</dbReference>
<dbReference type="InterPro" id="IPR017972">
    <property type="entry name" value="Cyt_P450_CS"/>
</dbReference>
<dbReference type="InterPro" id="IPR002401">
    <property type="entry name" value="Cyt_P450_E_grp-I"/>
</dbReference>
<dbReference type="InterPro" id="IPR036396">
    <property type="entry name" value="Cyt_P450_sf"/>
</dbReference>
<dbReference type="InterPro" id="IPR050182">
    <property type="entry name" value="Cytochrome_P450_fam2"/>
</dbReference>
<dbReference type="PANTHER" id="PTHR24300">
    <property type="entry name" value="CYTOCHROME P450 508A4-RELATED"/>
    <property type="match status" value="1"/>
</dbReference>
<dbReference type="PANTHER" id="PTHR24300:SF319">
    <property type="entry name" value="CYTOCHROME P450, FAMILY 2, SUBFAMILY AC, POLYPEPTIDE 1"/>
    <property type="match status" value="1"/>
</dbReference>
<dbReference type="Pfam" id="PF00067">
    <property type="entry name" value="p450"/>
    <property type="match status" value="1"/>
</dbReference>
<dbReference type="PRINTS" id="PR00463">
    <property type="entry name" value="EP450I"/>
</dbReference>
<dbReference type="PRINTS" id="PR00385">
    <property type="entry name" value="P450"/>
</dbReference>
<dbReference type="SUPFAM" id="SSF48264">
    <property type="entry name" value="Cytochrome P450"/>
    <property type="match status" value="1"/>
</dbReference>
<dbReference type="PROSITE" id="PS00086">
    <property type="entry name" value="CYTOCHROME_P450"/>
    <property type="match status" value="1"/>
</dbReference>
<name>CP2K6_DANRE</name>
<feature type="chain" id="PRO_0000442729" description="Cytochrome P450 2K6">
    <location>
        <begin position="1"/>
        <end position="505"/>
    </location>
</feature>
<feature type="transmembrane region" description="Helical" evidence="2">
    <location>
        <begin position="7"/>
        <end position="27"/>
    </location>
</feature>
<feature type="binding site" description="axial binding residue" evidence="1">
    <location>
        <position position="448"/>
    </location>
    <ligand>
        <name>heme</name>
        <dbReference type="ChEBI" id="CHEBI:30413"/>
    </ligand>
    <ligandPart>
        <name>Fe</name>
        <dbReference type="ChEBI" id="CHEBI:18248"/>
    </ligandPart>
</feature>
<feature type="sequence conflict" description="In Ref. 1; AAK97022 and 3; AAH47194/AAH55556/AAI64859." evidence="6" ref="1 3">
    <original>T</original>
    <variation>A</variation>
    <location>
        <position position="16"/>
    </location>
</feature>
<feature type="sequence conflict" description="In Ref. 3; AAH47194/AAH55556/AAI64859." evidence="6" ref="3">
    <original>K</original>
    <variation>R</variation>
    <location>
        <position position="73"/>
    </location>
</feature>
<feature type="sequence conflict" description="In Ref. 3; AAH47194/AAH55556/AAI64859." evidence="6" ref="3">
    <original>R</original>
    <variation>K</variation>
    <location>
        <position position="250"/>
    </location>
</feature>
<feature type="sequence conflict" description="In Ref. 3; AAH55556." evidence="6" ref="3">
    <original>N</original>
    <variation>D</variation>
    <location>
        <position position="412"/>
    </location>
</feature>
<feature type="sequence conflict" description="In Ref. 3; AAH47194/AAH55556/AAI64859." evidence="6" ref="3">
    <original>T</original>
    <variation>M</variation>
    <location>
        <position position="416"/>
    </location>
</feature>
<protein>
    <recommendedName>
        <fullName evidence="5">Cytochrome P450 2K6</fullName>
        <ecNumber evidence="4">1.14.14.-</ecNumber>
    </recommendedName>
</protein>